<organism>
    <name type="scientific">Bartonella bacilliformis (strain ATCC 35685 / KC583 / Herrer 020/F12,63)</name>
    <dbReference type="NCBI Taxonomy" id="360095"/>
    <lineage>
        <taxon>Bacteria</taxon>
        <taxon>Pseudomonadati</taxon>
        <taxon>Pseudomonadota</taxon>
        <taxon>Alphaproteobacteria</taxon>
        <taxon>Hyphomicrobiales</taxon>
        <taxon>Bartonellaceae</taxon>
        <taxon>Bartonella</taxon>
    </lineage>
</organism>
<reference key="1">
    <citation type="submission" date="2006-12" db="EMBL/GenBank/DDBJ databases">
        <authorList>
            <person name="Hendrix L."/>
            <person name="Mohamoud Y."/>
            <person name="Radune D."/>
            <person name="Shvartsbeyn A."/>
            <person name="Daugherty S."/>
            <person name="Dodson R."/>
            <person name="Durkin A.S."/>
            <person name="Harkins D."/>
            <person name="Huot H."/>
            <person name="Kothari S.P."/>
            <person name="Madupu R."/>
            <person name="Li J."/>
            <person name="Nelson W.C."/>
            <person name="Shrivastava S."/>
            <person name="Giglio M.G."/>
            <person name="Haft D."/>
            <person name="Selengut J."/>
            <person name="Fraser-Ligget C."/>
            <person name="Seshadri R."/>
        </authorList>
    </citation>
    <scope>NUCLEOTIDE SEQUENCE [LARGE SCALE GENOMIC DNA]</scope>
    <source>
        <strain>ATCC 35685 / KC583 / Herrer 020/F12,63</strain>
    </source>
</reference>
<gene>
    <name evidence="1" type="primary">kdsB</name>
    <name type="ordered locus">BARBAKC583_1236</name>
</gene>
<accession>A1UU32</accession>
<dbReference type="EC" id="2.7.7.38" evidence="1"/>
<dbReference type="EMBL" id="CP000524">
    <property type="protein sequence ID" value="ABM45531.1"/>
    <property type="molecule type" value="Genomic_DNA"/>
</dbReference>
<dbReference type="RefSeq" id="WP_005767945.1">
    <property type="nucleotide sequence ID" value="NC_008783.1"/>
</dbReference>
<dbReference type="SMR" id="A1UU32"/>
<dbReference type="STRING" id="360095.BARBAKC583_1236"/>
<dbReference type="GeneID" id="4684700"/>
<dbReference type="KEGG" id="bbk:BARBAKC583_1236"/>
<dbReference type="PATRIC" id="fig|360095.6.peg.1212"/>
<dbReference type="eggNOG" id="COG1212">
    <property type="taxonomic scope" value="Bacteria"/>
</dbReference>
<dbReference type="HOGENOM" id="CLU_065038_0_1_5"/>
<dbReference type="OrthoDB" id="9815559at2"/>
<dbReference type="UniPathway" id="UPA00030"/>
<dbReference type="UniPathway" id="UPA00358">
    <property type="reaction ID" value="UER00476"/>
</dbReference>
<dbReference type="Proteomes" id="UP000000643">
    <property type="component" value="Chromosome"/>
</dbReference>
<dbReference type="GO" id="GO:0005829">
    <property type="term" value="C:cytosol"/>
    <property type="evidence" value="ECO:0007669"/>
    <property type="project" value="TreeGrafter"/>
</dbReference>
<dbReference type="GO" id="GO:0008690">
    <property type="term" value="F:3-deoxy-manno-octulosonate cytidylyltransferase activity"/>
    <property type="evidence" value="ECO:0007669"/>
    <property type="project" value="UniProtKB-UniRule"/>
</dbReference>
<dbReference type="GO" id="GO:0033468">
    <property type="term" value="P:CMP-keto-3-deoxy-D-manno-octulosonic acid biosynthetic process"/>
    <property type="evidence" value="ECO:0007669"/>
    <property type="project" value="UniProtKB-UniRule"/>
</dbReference>
<dbReference type="GO" id="GO:0009103">
    <property type="term" value="P:lipopolysaccharide biosynthetic process"/>
    <property type="evidence" value="ECO:0007669"/>
    <property type="project" value="UniProtKB-UniRule"/>
</dbReference>
<dbReference type="CDD" id="cd02517">
    <property type="entry name" value="CMP-KDO-Synthetase"/>
    <property type="match status" value="1"/>
</dbReference>
<dbReference type="Gene3D" id="3.90.550.10">
    <property type="entry name" value="Spore Coat Polysaccharide Biosynthesis Protein SpsA, Chain A"/>
    <property type="match status" value="1"/>
</dbReference>
<dbReference type="HAMAP" id="MF_00057">
    <property type="entry name" value="KdsB"/>
    <property type="match status" value="1"/>
</dbReference>
<dbReference type="InterPro" id="IPR003329">
    <property type="entry name" value="Cytidylyl_trans"/>
</dbReference>
<dbReference type="InterPro" id="IPR004528">
    <property type="entry name" value="KdsB"/>
</dbReference>
<dbReference type="InterPro" id="IPR029044">
    <property type="entry name" value="Nucleotide-diphossugar_trans"/>
</dbReference>
<dbReference type="NCBIfam" id="TIGR00466">
    <property type="entry name" value="kdsB"/>
    <property type="match status" value="1"/>
</dbReference>
<dbReference type="NCBIfam" id="NF003948">
    <property type="entry name" value="PRK05450.1-1"/>
    <property type="match status" value="1"/>
</dbReference>
<dbReference type="NCBIfam" id="NF003952">
    <property type="entry name" value="PRK05450.1-5"/>
    <property type="match status" value="1"/>
</dbReference>
<dbReference type="PANTHER" id="PTHR42866">
    <property type="entry name" value="3-DEOXY-MANNO-OCTULOSONATE CYTIDYLYLTRANSFERASE"/>
    <property type="match status" value="1"/>
</dbReference>
<dbReference type="PANTHER" id="PTHR42866:SF2">
    <property type="entry name" value="3-DEOXY-MANNO-OCTULOSONATE CYTIDYLYLTRANSFERASE, MITOCHONDRIAL"/>
    <property type="match status" value="1"/>
</dbReference>
<dbReference type="Pfam" id="PF02348">
    <property type="entry name" value="CTP_transf_3"/>
    <property type="match status" value="1"/>
</dbReference>
<dbReference type="SUPFAM" id="SSF53448">
    <property type="entry name" value="Nucleotide-diphospho-sugar transferases"/>
    <property type="match status" value="1"/>
</dbReference>
<sequence length="243" mass="27099">MTLKPLILIPARMGSTRLPEKVLAEISGKPMIVHVAERAKEAALGPTIIATDHDAIAQAVTAYGHEYVMTHTHHQSGSDRIYEALTRIDPEQRYNAILNVQGDLPTVTPNALISVLQLLKNNLTDIATLGAEIIEDNEKNNPNIVKIIGTPIAQNRLRALYFTRATAPYGNGPLYHHIGLYAYRRKALEKFVSLKPSTLEQREKLEQLRALENNMRIDVEIVDTALLGVDTHHDLEKVRKILA</sequence>
<protein>
    <recommendedName>
        <fullName evidence="1">3-deoxy-manno-octulosonate cytidylyltransferase</fullName>
        <ecNumber evidence="1">2.7.7.38</ecNumber>
    </recommendedName>
    <alternativeName>
        <fullName evidence="1">CMP-2-keto-3-deoxyoctulosonic acid synthase</fullName>
        <shortName evidence="1">CKS</shortName>
        <shortName evidence="1">CMP-KDO synthase</shortName>
    </alternativeName>
</protein>
<feature type="chain" id="PRO_0000370000" description="3-deoxy-manno-octulosonate cytidylyltransferase">
    <location>
        <begin position="1"/>
        <end position="243"/>
    </location>
</feature>
<name>KDSB_BARBK</name>
<comment type="function">
    <text evidence="1">Activates KDO (a required 8-carbon sugar) for incorporation into bacterial lipopolysaccharide in Gram-negative bacteria.</text>
</comment>
<comment type="catalytic activity">
    <reaction evidence="1">
        <text>3-deoxy-alpha-D-manno-oct-2-ulosonate + CTP = CMP-3-deoxy-beta-D-manno-octulosonate + diphosphate</text>
        <dbReference type="Rhea" id="RHEA:23448"/>
        <dbReference type="ChEBI" id="CHEBI:33019"/>
        <dbReference type="ChEBI" id="CHEBI:37563"/>
        <dbReference type="ChEBI" id="CHEBI:85986"/>
        <dbReference type="ChEBI" id="CHEBI:85987"/>
        <dbReference type="EC" id="2.7.7.38"/>
    </reaction>
</comment>
<comment type="pathway">
    <text evidence="1">Nucleotide-sugar biosynthesis; CMP-3-deoxy-D-manno-octulosonate biosynthesis; CMP-3-deoxy-D-manno-octulosonate from 3-deoxy-D-manno-octulosonate and CTP: step 1/1.</text>
</comment>
<comment type="pathway">
    <text evidence="1">Bacterial outer membrane biogenesis; lipopolysaccharide biosynthesis.</text>
</comment>
<comment type="subcellular location">
    <subcellularLocation>
        <location evidence="1">Cytoplasm</location>
    </subcellularLocation>
</comment>
<comment type="similarity">
    <text evidence="1">Belongs to the KdsB family.</text>
</comment>
<keyword id="KW-0963">Cytoplasm</keyword>
<keyword id="KW-0448">Lipopolysaccharide biosynthesis</keyword>
<keyword id="KW-0548">Nucleotidyltransferase</keyword>
<keyword id="KW-0808">Transferase</keyword>
<proteinExistence type="inferred from homology"/>
<evidence type="ECO:0000255" key="1">
    <source>
        <dbReference type="HAMAP-Rule" id="MF_00057"/>
    </source>
</evidence>